<feature type="chain" id="PRO_0000213701" description="Protein-glutamine gamma-glutamyltransferase K">
    <location>
        <begin position="1"/>
        <end position="817"/>
    </location>
</feature>
<feature type="region of interest" description="Membrane anchorage region">
    <location>
        <begin position="1"/>
        <end position="100"/>
    </location>
</feature>
<feature type="region of interest" description="Disordered" evidence="5">
    <location>
        <begin position="1"/>
        <end position="38"/>
    </location>
</feature>
<feature type="region of interest" description="Disordered" evidence="5">
    <location>
        <begin position="59"/>
        <end position="105"/>
    </location>
</feature>
<feature type="region of interest" description="Disordered" evidence="5">
    <location>
        <begin position="793"/>
        <end position="817"/>
    </location>
</feature>
<feature type="compositionally biased region" description="Pro residues" evidence="5">
    <location>
        <begin position="17"/>
        <end position="26"/>
    </location>
</feature>
<feature type="compositionally biased region" description="Low complexity" evidence="5">
    <location>
        <begin position="71"/>
        <end position="84"/>
    </location>
</feature>
<feature type="active site" evidence="4">
    <location>
        <position position="377"/>
    </location>
</feature>
<feature type="active site" evidence="4">
    <location>
        <position position="436"/>
    </location>
</feature>
<feature type="active site" evidence="4">
    <location>
        <position position="459"/>
    </location>
</feature>
<feature type="binding site" evidence="1">
    <location>
        <position position="499"/>
    </location>
    <ligand>
        <name>Ca(2+)</name>
        <dbReference type="ChEBI" id="CHEBI:29108"/>
    </ligand>
</feature>
<feature type="binding site" evidence="1">
    <location>
        <position position="501"/>
    </location>
    <ligand>
        <name>Ca(2+)</name>
        <dbReference type="ChEBI" id="CHEBI:29108"/>
    </ligand>
</feature>
<feature type="binding site" evidence="1">
    <location>
        <position position="548"/>
    </location>
    <ligand>
        <name>Ca(2+)</name>
        <dbReference type="ChEBI" id="CHEBI:29108"/>
    </ligand>
</feature>
<feature type="binding site" evidence="1">
    <location>
        <position position="553"/>
    </location>
    <ligand>
        <name>Ca(2+)</name>
        <dbReference type="ChEBI" id="CHEBI:29108"/>
    </ligand>
</feature>
<feature type="modified residue" description="Phosphothreonine" evidence="3">
    <location>
        <position position="22"/>
    </location>
</feature>
<feature type="modified residue" description="Phosphoserine" evidence="14">
    <location>
        <position position="24"/>
    </location>
</feature>
<feature type="modified residue" description="Phosphoserine" evidence="2">
    <location>
        <position position="68"/>
    </location>
</feature>
<feature type="modified residue" description="Phosphoserine" evidence="14">
    <location>
        <position position="82"/>
    </location>
</feature>
<feature type="modified residue" description="Phosphoserine" evidence="14">
    <location>
        <position position="85"/>
    </location>
</feature>
<feature type="modified residue" description="Phosphoserine" evidence="14">
    <location>
        <position position="92"/>
    </location>
</feature>
<feature type="modified residue" description="Phosphoserine" evidence="3">
    <location>
        <position position="95"/>
    </location>
</feature>
<feature type="splice variant" id="VSP_056840" description="In isoform 2." evidence="17">
    <location>
        <begin position="1"/>
        <end position="442"/>
    </location>
</feature>
<feature type="sequence variant" id="VAR_015220" description="In ARCI1; skin phenotype consistent with lamellar ichthyosis; dbSNP:rs41295338." evidence="13 16">
    <original>S</original>
    <variation>Y</variation>
    <location>
        <position position="42"/>
    </location>
</feature>
<feature type="sequence variant" id="VAR_058638" description="In ARCI1." evidence="9">
    <original>C</original>
    <variation>S</variation>
    <location>
        <position position="53"/>
    </location>
</feature>
<feature type="sequence variant" id="VAR_058639" description="In ARCI1; dbSNP:rs121918729." evidence="9">
    <original>G</original>
    <variation>D</variation>
    <location>
        <position position="94"/>
    </location>
</feature>
<feature type="sequence variant" id="VAR_020918" description="In ARCI1; skin phenotype consistent with lamellar ichthyosis; dbSNP:rs398122901." evidence="7">
    <original>D</original>
    <variation>V</variation>
    <location>
        <position position="102"/>
    </location>
</feature>
<feature type="sequence variant" id="VAR_058640" description="In ARCI1; dbSNP:rs397514524." evidence="9">
    <original>R</original>
    <variation>C</variation>
    <location>
        <position position="126"/>
    </location>
</feature>
<feature type="sequence variant" id="VAR_058641" description="In ARCI1; dbSNP:rs200491579." evidence="9">
    <original>R</original>
    <variation>H</variation>
    <location>
        <position position="126"/>
    </location>
</feature>
<feature type="sequence variant" id="VAR_029268" description="In dbSNP:rs2229462.">
    <original>D</original>
    <variation>N</variation>
    <location>
        <position position="132"/>
    </location>
</feature>
<feature type="sequence variant" id="VAR_058642" description="In ARCI1; dbSNP:rs147916609." evidence="9">
    <original>Y</original>
    <variation>C</variation>
    <location>
        <position position="134"/>
    </location>
</feature>
<feature type="sequence variant" id="VAR_058643" description="In ARCI1; dbSNP:rs121918716." evidence="9">
    <original>R</original>
    <variation>C</variation>
    <location>
        <position position="142"/>
    </location>
</feature>
<feature type="sequence variant" id="VAR_007476" description="In ARCI1; skin phenotype consistent with lamellar ichthyosis; dbSNP:rs121918718." evidence="12 15">
    <original>R</original>
    <variation>H</variation>
    <location>
        <position position="142"/>
    </location>
</feature>
<feature type="sequence variant" id="VAR_058644" description="In ARCI1." evidence="9">
    <original>R</original>
    <variation>P</variation>
    <location>
        <position position="142"/>
    </location>
</feature>
<feature type="sequence variant" id="VAR_007477" description="In ARCI1; inhibits cell proliferation; dbSNP:rs531650682." evidence="11 15">
    <original>R</original>
    <variation>C</variation>
    <location>
        <position position="143"/>
    </location>
</feature>
<feature type="sequence variant" id="VAR_007478" description="In ARCI1; skin phenotype consistent with lamellar ichthyosis; dbSNP:rs121918719." evidence="12">
    <original>R</original>
    <variation>H</variation>
    <location>
        <position position="143"/>
    </location>
</feature>
<feature type="sequence variant" id="VAR_058645" description="In ARCI1; dbSNP:rs1465243895." evidence="9">
    <original>G</original>
    <variation>E</variation>
    <location>
        <position position="144"/>
    </location>
</feature>
<feature type="sequence variant" id="VAR_058646" description="In ARCI1; dbSNP:rs778635368." evidence="9">
    <original>G</original>
    <variation>R</variation>
    <location>
        <position position="144"/>
    </location>
</feature>
<feature type="sequence variant" id="VAR_058647" description="In ARCI1; dbSNP:rs121918728." evidence="9">
    <original>S</original>
    <variation>C</variation>
    <location>
        <position position="160"/>
    </location>
</feature>
<feature type="sequence variant" id="VAR_058648" description="In ARCI1; dbSNP:rs878853259." evidence="9">
    <original>L</original>
    <variation>Q</variation>
    <location>
        <position position="205"/>
    </location>
</feature>
<feature type="sequence variant" id="VAR_058649" description="In ARCI1." evidence="9">
    <original>V</original>
    <variation>F</variation>
    <location>
        <position position="209"/>
    </location>
</feature>
<feature type="sequence variant" id="VAR_075227" description="In ARCI1; inhibits cell proliferation; dbSNP:rs1555306304." evidence="11">
    <original>S</original>
    <variation>F</variation>
    <location>
        <position position="212"/>
    </location>
</feature>
<feature type="sequence variant" id="VAR_007479" description="In ARCI1; skin phenotype consistent with lamellar ichthyosis; dbSNP:rs121918732." evidence="15">
    <original>G</original>
    <variation>S</variation>
    <location>
        <position position="218"/>
    </location>
</feature>
<feature type="sequence variant" id="VAR_058650" description="In ARCI1; dbSNP:rs549195122." evidence="9">
    <original>R</original>
    <variation>H</variation>
    <location>
        <position position="225"/>
    </location>
</feature>
<feature type="sequence variant" id="VAR_058651" description="In ARCI1; dbSNP:rs549195122." evidence="9">
    <original>R</original>
    <variation>P</variation>
    <location>
        <position position="225"/>
    </location>
</feature>
<feature type="sequence variant" id="VAR_058652" description="In ARCI1." evidence="9">
    <original>I</original>
    <variation>S</variation>
    <location>
        <position position="243"/>
    </location>
</feature>
<feature type="sequence variant" id="VAR_058653" description="In ARCI1." evidence="9">
    <original>P</original>
    <variation>L</variation>
    <location>
        <position position="249"/>
    </location>
</feature>
<feature type="sequence variant" id="VAR_058654" description="In ARCI1; dbSNP:rs781006633." evidence="9">
    <original>R</original>
    <variation>Q</variation>
    <location>
        <position position="264"/>
    </location>
</feature>
<feature type="sequence variant" id="VAR_058655" description="In ARCI1; dbSNP:rs201868387." evidence="9">
    <original>R</original>
    <variation>W</variation>
    <location>
        <position position="264"/>
    </location>
</feature>
<feature type="sequence variant" id="VAR_058656" description="In ARCI1; dbSNP:rs764040146." evidence="9">
    <original>S</original>
    <variation>P</variation>
    <location>
        <position position="272"/>
    </location>
</feature>
<feature type="sequence variant" id="VAR_058657" description="In ARCI1; dbSNP:rs397514523." evidence="9">
    <original>Y</original>
    <variation>N</variation>
    <location>
        <position position="276"/>
    </location>
</feature>
<feature type="sequence variant" id="VAR_058658" description="In ARCI1; dbSNP:rs121918725." evidence="9">
    <original>G</original>
    <variation>R</variation>
    <location>
        <position position="278"/>
    </location>
</feature>
<feature type="sequence variant" id="VAR_058659" description="In ARCI1; dbSNP:rs749721551." evidence="9">
    <original>E</original>
    <variation>K</variation>
    <location>
        <position position="285"/>
    </location>
</feature>
<feature type="sequence variant" id="VAR_058660" description="In ARCI1; dbSNP:rs121918727." evidence="9">
    <original>R</original>
    <variation>Q</variation>
    <location>
        <position position="286"/>
    </location>
</feature>
<feature type="sequence variant" id="VAR_020919" description="In ARCI1; skin phenotype consistent with lamellar ichthyosis; dbSNP:rs121918730." evidence="7">
    <original>N</original>
    <variation>T</variation>
    <location>
        <position position="289"/>
    </location>
</feature>
<feature type="sequence variant" id="VAR_058661" description="In ARCI1." evidence="9">
    <original>F</original>
    <variation>V</variation>
    <location>
        <position position="293"/>
    </location>
</feature>
<feature type="sequence variant" id="VAR_058662" description="In ARCI1; dbSNP:rs753798494." evidence="9">
    <original>I</original>
    <variation>F</variation>
    <location>
        <position position="304"/>
    </location>
</feature>
<feature type="sequence variant" id="VAR_058663" description="In ARCI1; dbSNP:rs121918731." evidence="10">
    <original>R</original>
    <variation>G</variation>
    <location>
        <position position="307"/>
    </location>
</feature>
<feature type="sequence variant" id="VAR_020920" description="In ARCI1; skin phenotype consistent with lamellar ichthyosis; dbSNP:rs121918731." evidence="7">
    <original>R</original>
    <variation>W</variation>
    <location>
        <position position="307"/>
    </location>
</feature>
<feature type="sequence variant" id="VAR_058664" description="In ARCI1; dbSNP:rs397514525." evidence="9">
    <original>R</original>
    <variation>C</variation>
    <location>
        <position position="315"/>
    </location>
</feature>
<feature type="sequence variant" id="VAR_058665" description="In ARCI1; dbSNP:rs143473912." evidence="9">
    <original>R</original>
    <variation>H</variation>
    <location>
        <position position="315"/>
    </location>
</feature>
<feature type="sequence variant" id="VAR_058666" description="In ARCI1; dbSNP:rs143473912." evidence="9">
    <original>R</original>
    <variation>L</variation>
    <location>
        <position position="315"/>
    </location>
</feature>
<feature type="sequence variant" id="VAR_015221" description="In ARCI1; skin phenotype consistent with lamellar ichthyosis; dbSNP:rs121918717." evidence="13">
    <original>R</original>
    <variation>Q</variation>
    <location>
        <position position="323"/>
    </location>
</feature>
<feature type="sequence variant" id="VAR_058667" description="In ARCI1; dbSNP:rs771820315." evidence="9">
    <original>R</original>
    <variation>W</variation>
    <location>
        <position position="323"/>
    </location>
</feature>
<feature type="sequence variant" id="VAR_058668" description="In ARCI1." evidence="9">
    <original>N</original>
    <variation>H</variation>
    <location>
        <position position="330"/>
    </location>
</feature>
<feature type="sequence variant" id="VAR_058669" description="In ARCI1." evidence="9">
    <original>S</original>
    <variation>P</variation>
    <location>
        <position position="331"/>
    </location>
</feature>
<feature type="sequence variant" id="VAR_058670" description="In ARCI1." evidence="9">
    <original>W</original>
    <variation>R</variation>
    <location>
        <position position="342"/>
    </location>
</feature>
<feature type="sequence variant" id="VAR_058671" description="In ARCI1; dbSNP:rs779287673." evidence="9">
    <original>S</original>
    <variation>R</variation>
    <location>
        <position position="358"/>
    </location>
</feature>
<feature type="sequence variant" id="VAR_058672" description="In ARCI1; dbSNP:rs202037016." evidence="9">
    <original>V</original>
    <variation>M</variation>
    <location>
        <position position="359"/>
    </location>
</feature>
<feature type="sequence variant" id="VAR_058673" description="In ARCI1." evidence="9">
    <original>Y</original>
    <variation>D</variation>
    <location>
        <position position="365"/>
    </location>
</feature>
<feature type="sequence variant" id="VAR_058674" description="In ARCI1." evidence="9">
    <original>L</original>
    <variation>P</variation>
    <location>
        <position position="366"/>
    </location>
</feature>
<feature type="sequence variant" id="VAR_055374" description="In dbSNP:rs41293794." evidence="16">
    <original>V</original>
    <variation>I</variation>
    <location>
        <position position="372"/>
    </location>
</feature>
<feature type="sequence variant" id="VAR_007480" description="In ARCI1; dbSNP:rs121918720." evidence="15">
    <original>V</original>
    <variation>L</variation>
    <location>
        <position position="379"/>
    </location>
</feature>
<feature type="sequence variant" id="VAR_058675" description="In ARCI1." evidence="9">
    <original>G</original>
    <variation>R</variation>
    <location>
        <position position="382"/>
    </location>
</feature>
<feature type="sequence variant" id="VAR_058676" description="In ARCI1; dbSNP:rs121918722." evidence="9">
    <original>V</original>
    <variation>M</variation>
    <location>
        <position position="383"/>
    </location>
</feature>
<feature type="sequence variant" id="VAR_015222" description="In ARCI1; skin phenotype consistent with non-bullous congenital ichthyosiform erythroderma; dbSNP:rs121918723." evidence="6">
    <original>R</original>
    <variation>H</variation>
    <location>
        <position position="389"/>
    </location>
</feature>
<feature type="sequence variant" id="VAR_058677" description="In ARCI1; dbSNP:rs121918723." evidence="9">
    <original>R</original>
    <variation>P</variation>
    <location>
        <position position="389"/>
    </location>
</feature>
<feature type="sequence variant" id="VAR_058678" description="In ARCI1; dbSNP:rs121918726." evidence="9">
    <original>G</original>
    <variation>D</variation>
    <location>
        <position position="392"/>
    </location>
</feature>
<feature type="sequence variant" id="VAR_058679" description="In ARCI1; dbSNP:rs121918721." evidence="9">
    <original>R</original>
    <variation>H</variation>
    <location>
        <position position="396"/>
    </location>
</feature>
<feature type="sequence variant" id="VAR_007481" description="In ARCI1; skin phenotype consistent with non-bullous congenital ichthyosiform erythroderma; dbSNP:rs121918721." evidence="15">
    <original>R</original>
    <variation>L</variation>
    <location>
        <position position="396"/>
    </location>
</feature>
<feature type="sequence variant" id="VAR_058680" description="In ARCI1." evidence="9">
    <original>R</original>
    <variation>S</variation>
    <location>
        <position position="396"/>
    </location>
</feature>
<feature type="sequence variant" id="VAR_058681" description="In ARCI1; dbSNP:rs991194429." evidence="9">
    <original>F</original>
    <variation>V</variation>
    <location>
        <position position="401"/>
    </location>
</feature>
<feature type="sequence variant" id="VAR_058682" description="In ARCI1; dbSNP:rs1555306103." evidence="9">
    <original>D</original>
    <variation>V</variation>
    <location>
        <position position="430"/>
    </location>
</feature>
<feature type="sequence variant" id="VAR_058683" description="In ARCI1; dbSNP:rs904122716 and dbSNP:rs1057517838." evidence="9">
    <original>G</original>
    <variation>S</variation>
    <location>
        <position position="473"/>
    </location>
</feature>
<feature type="sequence variant" id="VAR_058684" description="In ARCI1; dbSNP:rs121918724." evidence="9">
    <original>D</original>
    <variation>G</variation>
    <location>
        <position position="490"/>
    </location>
</feature>
<feature type="sequence variant" id="VAR_052550" description="In dbSNP:rs35312232." evidence="16">
    <original>V</original>
    <variation>M</variation>
    <location>
        <position position="518"/>
    </location>
</feature>
<feature type="sequence variant" id="VAR_058685" description="In ARCI1; dbSNP:rs142404759." evidence="9">
    <original>E</original>
    <variation>G</variation>
    <location>
        <position position="520"/>
    </location>
</feature>
<feature type="sequence variant" id="VAR_058686" description="In ARCI1; dbSNP:rs1044429462." evidence="9">
    <original>Y</original>
    <variation>C</variation>
    <location>
        <position position="544"/>
    </location>
</feature>
<feature type="sequence variant" id="VAR_052551" description="In dbSNP:rs2229464." evidence="16">
    <original>R</original>
    <variation>C</variation>
    <location>
        <position position="607"/>
    </location>
</feature>
<feature type="sequence variant" id="VAR_058687" description="In ARCI1; dbSNP:rs147516124." evidence="9">
    <original>R</original>
    <variation>C</variation>
    <location>
        <position position="687"/>
    </location>
</feature>
<feature type="sequence variant" id="VAR_058688" description="In ARCI1." evidence="9">
    <original>R</original>
    <variation>H</variation>
    <location>
        <position position="687"/>
    </location>
</feature>
<feature type="sequence variant" id="VAR_052552" description="In dbSNP:rs35926651." evidence="16">
    <original>S</original>
    <variation>L</variation>
    <location>
        <position position="755"/>
    </location>
</feature>
<feature type="sequence variant" id="VAR_058689" description="In ARCI1; dbSNP:rs201853046." evidence="9">
    <original>R</original>
    <variation>C</variation>
    <location>
        <position position="764"/>
    </location>
</feature>
<feature type="sequence variant" id="VAR_024660" description="In dbSNP:rs2228337." evidence="16">
    <original>D</original>
    <variation>V</variation>
    <location>
        <position position="802"/>
    </location>
</feature>
<feature type="sequence conflict" description="In Ref. 5; M86360." evidence="18" ref="5">
    <location>
        <begin position="119"/>
        <end position="120"/>
    </location>
</feature>
<feature type="sequence conflict" description="In Ref. 4; AAA61156." evidence="18" ref="4">
    <original>C</original>
    <variation>A</variation>
    <location>
        <position position="301"/>
    </location>
</feature>
<feature type="sequence conflict" description="In Ref. 5; M86360." evidence="18" ref="5">
    <original>Q</original>
    <variation>H</variation>
    <location>
        <position position="508"/>
    </location>
</feature>
<feature type="sequence conflict" description="In Ref. 5; M86360." evidence="18" ref="5">
    <original>D</original>
    <variation>E</variation>
    <location>
        <position position="551"/>
    </location>
</feature>
<feature type="sequence conflict" description="In Ref. 3; AAA61166." evidence="18" ref="3">
    <original>R</original>
    <variation>A</variation>
    <location>
        <position position="554"/>
    </location>
</feature>
<feature type="sequence conflict" description="In Ref. 3; AAA61166." evidence="18" ref="3">
    <original>V</original>
    <variation>I</variation>
    <location>
        <position position="669"/>
    </location>
</feature>
<feature type="strand" evidence="20">
    <location>
        <begin position="693"/>
        <end position="699"/>
    </location>
</feature>
<feature type="strand" evidence="20">
    <location>
        <begin position="703"/>
        <end position="705"/>
    </location>
</feature>
<feature type="strand" evidence="20">
    <location>
        <begin position="707"/>
        <end position="714"/>
    </location>
</feature>
<feature type="strand" evidence="20">
    <location>
        <begin position="717"/>
        <end position="719"/>
    </location>
</feature>
<feature type="strand" evidence="20">
    <location>
        <begin position="723"/>
        <end position="730"/>
    </location>
</feature>
<feature type="turn" evidence="20">
    <location>
        <begin position="731"/>
        <end position="733"/>
    </location>
</feature>
<feature type="strand" evidence="20">
    <location>
        <begin position="734"/>
        <end position="741"/>
    </location>
</feature>
<feature type="strand" evidence="20">
    <location>
        <begin position="749"/>
        <end position="756"/>
    </location>
</feature>
<feature type="strand" evidence="20">
    <location>
        <begin position="767"/>
        <end position="771"/>
    </location>
</feature>
<feature type="helix" evidence="20">
    <location>
        <begin position="773"/>
        <end position="776"/>
    </location>
</feature>
<keyword id="KW-0002">3D-structure</keyword>
<keyword id="KW-0012">Acyltransferase</keyword>
<keyword id="KW-0025">Alternative splicing</keyword>
<keyword id="KW-0106">Calcium</keyword>
<keyword id="KW-0225">Disease variant</keyword>
<keyword id="KW-0977">Ichthyosis</keyword>
<keyword id="KW-0417">Keratinization</keyword>
<keyword id="KW-0449">Lipoprotein</keyword>
<keyword id="KW-0472">Membrane</keyword>
<keyword id="KW-0479">Metal-binding</keyword>
<keyword id="KW-0564">Palmitate</keyword>
<keyword id="KW-0597">Phosphoprotein</keyword>
<keyword id="KW-1267">Proteomics identification</keyword>
<keyword id="KW-1185">Reference proteome</keyword>
<keyword id="KW-0808">Transferase</keyword>
<reference key="1">
    <citation type="journal article" date="1990" name="Proc. Natl. Acad. Sci. U.S.A.">
        <title>Primary structure of keratinocyte transglutaminase.</title>
        <authorList>
            <person name="Phillips M.A."/>
            <person name="Stewart B.E."/>
            <person name="Qin Q."/>
            <person name="Chakravarty R."/>
            <person name="Floyd E.E."/>
            <person name="Jetten A.M."/>
            <person name="Rice R.H."/>
        </authorList>
    </citation>
    <scope>NUCLEOTIDE SEQUENCE [MRNA] (ISOFORM 1)</scope>
</reference>
<reference key="2">
    <citation type="journal article" date="1991" name="Biochem. Biophys. Res. Commun.">
        <title>Molecular cloning of human epidermal transglutaminase cDNA from keratinocytes in culture.</title>
        <authorList>
            <person name="Yamanishi K."/>
            <person name="Liew F.M."/>
            <person name="Konishi K."/>
            <person name="Yasuno H."/>
            <person name="Doi H."/>
            <person name="Hirano J."/>
            <person name="Fukushima S."/>
        </authorList>
    </citation>
    <scope>NUCLEOTIDE SEQUENCE [MRNA] (ISOFORM 1)</scope>
    <source>
        <tissue>Keratinocyte</tissue>
    </source>
</reference>
<reference key="3">
    <citation type="journal article" date="1991" name="J. Biol. Chem.">
        <title>The complete amino acid sequence of the human transglutaminase K enzyme deduced from the nucleic acid sequences of cDNA clones.</title>
        <authorList>
            <person name="Kim H.C."/>
            <person name="Idler W.W."/>
            <person name="Kim I.-G."/>
            <person name="Han J.H."/>
            <person name="Chung S.-I."/>
            <person name="Steinert P.M."/>
        </authorList>
    </citation>
    <scope>NUCLEOTIDE SEQUENCE [MRNA] (ISOFORM 1)</scope>
</reference>
<reference key="4">
    <citation type="journal article" date="1992" name="J. Biol. Chem.">
        <title>Genomic structure of keratinocyte transglutaminase. Recruitment of new exon for modified function.</title>
        <authorList>
            <person name="Phillips M.A."/>
            <person name="Stewart B.E."/>
            <person name="Rice R.H."/>
        </authorList>
    </citation>
    <scope>NUCLEOTIDE SEQUENCE [GENOMIC DNA]</scope>
    <source>
        <tissue>Placenta</tissue>
    </source>
</reference>
<reference key="5">
    <citation type="journal article" date="1992" name="J. Biol. Chem.">
        <title>Structure and organization of the human transglutaminase 1 gene.</title>
        <authorList>
            <person name="Kim I.-G."/>
            <person name="McBride O.W."/>
            <person name="Wang M."/>
            <person name="Kim S.-Y."/>
            <person name="Idler W.W."/>
            <person name="Steinert P.M."/>
        </authorList>
    </citation>
    <scope>NUCLEOTIDE SEQUENCE [GENOMIC DNA]</scope>
</reference>
<reference key="6">
    <citation type="journal article" date="1992" name="J. Biol. Chem.">
        <title>Structure of the gene for human transglutaminase 1.</title>
        <authorList>
            <person name="Yamanishi K."/>
            <person name="Inazawa J."/>
            <person name="Liew F."/>
            <person name="Nonomura K."/>
            <person name="Ariyama T."/>
            <person name="Yasuno H."/>
            <person name="Abe T."/>
            <person name="Doi H."/>
            <person name="Hirano J."/>
            <person name="Fukushima S."/>
        </authorList>
    </citation>
    <scope>NUCLEOTIDE SEQUENCE [GENOMIC DNA]</scope>
    <source>
        <tissue>Placenta</tissue>
    </source>
</reference>
<reference key="7">
    <citation type="journal article" date="1992" name="Proc. Natl. Acad. Sci. U.S.A.">
        <title>Organization and evolution of the human epidermal keratinocyte transglutaminase I gene.</title>
        <authorList>
            <person name="Polakowska R.R."/>
            <person name="Eickbush T."/>
            <person name="Falciano V."/>
            <person name="Razvi F."/>
            <person name="Goldsmith L.A."/>
        </authorList>
    </citation>
    <scope>NUCLEOTIDE SEQUENCE [GENOMIC DNA]</scope>
    <source>
        <tissue>Placenta</tissue>
    </source>
</reference>
<reference key="8">
    <citation type="journal article" date="2004" name="Nat. Genet.">
        <title>Complete sequencing and characterization of 21,243 full-length human cDNAs.</title>
        <authorList>
            <person name="Ota T."/>
            <person name="Suzuki Y."/>
            <person name="Nishikawa T."/>
            <person name="Otsuki T."/>
            <person name="Sugiyama T."/>
            <person name="Irie R."/>
            <person name="Wakamatsu A."/>
            <person name="Hayashi K."/>
            <person name="Sato H."/>
            <person name="Nagai K."/>
            <person name="Kimura K."/>
            <person name="Makita H."/>
            <person name="Sekine M."/>
            <person name="Obayashi M."/>
            <person name="Nishi T."/>
            <person name="Shibahara T."/>
            <person name="Tanaka T."/>
            <person name="Ishii S."/>
            <person name="Yamamoto J."/>
            <person name="Saito K."/>
            <person name="Kawai Y."/>
            <person name="Isono Y."/>
            <person name="Nakamura Y."/>
            <person name="Nagahari K."/>
            <person name="Murakami K."/>
            <person name="Yasuda T."/>
            <person name="Iwayanagi T."/>
            <person name="Wagatsuma M."/>
            <person name="Shiratori A."/>
            <person name="Sudo H."/>
            <person name="Hosoiri T."/>
            <person name="Kaku Y."/>
            <person name="Kodaira H."/>
            <person name="Kondo H."/>
            <person name="Sugawara M."/>
            <person name="Takahashi M."/>
            <person name="Kanda K."/>
            <person name="Yokoi T."/>
            <person name="Furuya T."/>
            <person name="Kikkawa E."/>
            <person name="Omura Y."/>
            <person name="Abe K."/>
            <person name="Kamihara K."/>
            <person name="Katsuta N."/>
            <person name="Sato K."/>
            <person name="Tanikawa M."/>
            <person name="Yamazaki M."/>
            <person name="Ninomiya K."/>
            <person name="Ishibashi T."/>
            <person name="Yamashita H."/>
            <person name="Murakawa K."/>
            <person name="Fujimori K."/>
            <person name="Tanai H."/>
            <person name="Kimata M."/>
            <person name="Watanabe M."/>
            <person name="Hiraoka S."/>
            <person name="Chiba Y."/>
            <person name="Ishida S."/>
            <person name="Ono Y."/>
            <person name="Takiguchi S."/>
            <person name="Watanabe S."/>
            <person name="Yosida M."/>
            <person name="Hotuta T."/>
            <person name="Kusano J."/>
            <person name="Kanehori K."/>
            <person name="Takahashi-Fujii A."/>
            <person name="Hara H."/>
            <person name="Tanase T.-O."/>
            <person name="Nomura Y."/>
            <person name="Togiya S."/>
            <person name="Komai F."/>
            <person name="Hara R."/>
            <person name="Takeuchi K."/>
            <person name="Arita M."/>
            <person name="Imose N."/>
            <person name="Musashino K."/>
            <person name="Yuuki H."/>
            <person name="Oshima A."/>
            <person name="Sasaki N."/>
            <person name="Aotsuka S."/>
            <person name="Yoshikawa Y."/>
            <person name="Matsunawa H."/>
            <person name="Ichihara T."/>
            <person name="Shiohata N."/>
            <person name="Sano S."/>
            <person name="Moriya S."/>
            <person name="Momiyama H."/>
            <person name="Satoh N."/>
            <person name="Takami S."/>
            <person name="Terashima Y."/>
            <person name="Suzuki O."/>
            <person name="Nakagawa S."/>
            <person name="Senoh A."/>
            <person name="Mizoguchi H."/>
            <person name="Goto Y."/>
            <person name="Shimizu F."/>
            <person name="Wakebe H."/>
            <person name="Hishigaki H."/>
            <person name="Watanabe T."/>
            <person name="Sugiyama A."/>
            <person name="Takemoto M."/>
            <person name="Kawakami B."/>
            <person name="Yamazaki M."/>
            <person name="Watanabe K."/>
            <person name="Kumagai A."/>
            <person name="Itakura S."/>
            <person name="Fukuzumi Y."/>
            <person name="Fujimori Y."/>
            <person name="Komiyama M."/>
            <person name="Tashiro H."/>
            <person name="Tanigami A."/>
            <person name="Fujiwara T."/>
            <person name="Ono T."/>
            <person name="Yamada K."/>
            <person name="Fujii Y."/>
            <person name="Ozaki K."/>
            <person name="Hirao M."/>
            <person name="Ohmori Y."/>
            <person name="Kawabata A."/>
            <person name="Hikiji T."/>
            <person name="Kobatake N."/>
            <person name="Inagaki H."/>
            <person name="Ikema Y."/>
            <person name="Okamoto S."/>
            <person name="Okitani R."/>
            <person name="Kawakami T."/>
            <person name="Noguchi S."/>
            <person name="Itoh T."/>
            <person name="Shigeta K."/>
            <person name="Senba T."/>
            <person name="Matsumura K."/>
            <person name="Nakajima Y."/>
            <person name="Mizuno T."/>
            <person name="Morinaga M."/>
            <person name="Sasaki M."/>
            <person name="Togashi T."/>
            <person name="Oyama M."/>
            <person name="Hata H."/>
            <person name="Watanabe M."/>
            <person name="Komatsu T."/>
            <person name="Mizushima-Sugano J."/>
            <person name="Satoh T."/>
            <person name="Shirai Y."/>
            <person name="Takahashi Y."/>
            <person name="Nakagawa K."/>
            <person name="Okumura K."/>
            <person name="Nagase T."/>
            <person name="Nomura N."/>
            <person name="Kikuchi H."/>
            <person name="Masuho Y."/>
            <person name="Yamashita R."/>
            <person name="Nakai K."/>
            <person name="Yada T."/>
            <person name="Nakamura Y."/>
            <person name="Ohara O."/>
            <person name="Isogai T."/>
            <person name="Sugano S."/>
        </authorList>
    </citation>
    <scope>NUCLEOTIDE SEQUENCE [LARGE SCALE MRNA] (ISOFORMS 1 AND 2)</scope>
    <source>
        <tissue>Esophagus</tissue>
    </source>
</reference>
<reference key="9">
    <citation type="submission" date="2006-05" db="EMBL/GenBank/DDBJ databases">
        <authorList>
            <consortium name="NIEHS SNPs program"/>
        </authorList>
    </citation>
    <scope>NUCLEOTIDE SEQUENCE [GENOMIC DNA]</scope>
    <scope>VARIANTS TYR-42; ILE-372; MET-518; CYS-607; LEU-755 AND VAL-802</scope>
</reference>
<reference key="10">
    <citation type="journal article" date="2003" name="Nature">
        <title>The DNA sequence and analysis of human chromosome 14.</title>
        <authorList>
            <person name="Heilig R."/>
            <person name="Eckenberg R."/>
            <person name="Petit J.-L."/>
            <person name="Fonknechten N."/>
            <person name="Da Silva C."/>
            <person name="Cattolico L."/>
            <person name="Levy M."/>
            <person name="Barbe V."/>
            <person name="De Berardinis V."/>
            <person name="Ureta-Vidal A."/>
            <person name="Pelletier E."/>
            <person name="Vico V."/>
            <person name="Anthouard V."/>
            <person name="Rowen L."/>
            <person name="Madan A."/>
            <person name="Qin S."/>
            <person name="Sun H."/>
            <person name="Du H."/>
            <person name="Pepin K."/>
            <person name="Artiguenave F."/>
            <person name="Robert C."/>
            <person name="Cruaud C."/>
            <person name="Bruels T."/>
            <person name="Jaillon O."/>
            <person name="Friedlander L."/>
            <person name="Samson G."/>
            <person name="Brottier P."/>
            <person name="Cure S."/>
            <person name="Segurens B."/>
            <person name="Aniere F."/>
            <person name="Samain S."/>
            <person name="Crespeau H."/>
            <person name="Abbasi N."/>
            <person name="Aiach N."/>
            <person name="Boscus D."/>
            <person name="Dickhoff R."/>
            <person name="Dors M."/>
            <person name="Dubois I."/>
            <person name="Friedman C."/>
            <person name="Gouyvenoux M."/>
            <person name="James R."/>
            <person name="Madan A."/>
            <person name="Mairey-Estrada B."/>
            <person name="Mangenot S."/>
            <person name="Martins N."/>
            <person name="Menard M."/>
            <person name="Oztas S."/>
            <person name="Ratcliffe A."/>
            <person name="Shaffer T."/>
            <person name="Trask B."/>
            <person name="Vacherie B."/>
            <person name="Bellemere C."/>
            <person name="Belser C."/>
            <person name="Besnard-Gonnet M."/>
            <person name="Bartol-Mavel D."/>
            <person name="Boutard M."/>
            <person name="Briez-Silla S."/>
            <person name="Combette S."/>
            <person name="Dufosse-Laurent V."/>
            <person name="Ferron C."/>
            <person name="Lechaplais C."/>
            <person name="Louesse C."/>
            <person name="Muselet D."/>
            <person name="Magdelenat G."/>
            <person name="Pateau E."/>
            <person name="Petit E."/>
            <person name="Sirvain-Trukniewicz P."/>
            <person name="Trybou A."/>
            <person name="Vega-Czarny N."/>
            <person name="Bataille E."/>
            <person name="Bluet E."/>
            <person name="Bordelais I."/>
            <person name="Dubois M."/>
            <person name="Dumont C."/>
            <person name="Guerin T."/>
            <person name="Haffray S."/>
            <person name="Hammadi R."/>
            <person name="Muanga J."/>
            <person name="Pellouin V."/>
            <person name="Robert D."/>
            <person name="Wunderle E."/>
            <person name="Gauguet G."/>
            <person name="Roy A."/>
            <person name="Sainte-Marthe L."/>
            <person name="Verdier J."/>
            <person name="Verdier-Discala C."/>
            <person name="Hillier L.W."/>
            <person name="Fulton L."/>
            <person name="McPherson J."/>
            <person name="Matsuda F."/>
            <person name="Wilson R."/>
            <person name="Scarpelli C."/>
            <person name="Gyapay G."/>
            <person name="Wincker P."/>
            <person name="Saurin W."/>
            <person name="Quetier F."/>
            <person name="Waterston R."/>
            <person name="Hood L."/>
            <person name="Weissenbach J."/>
        </authorList>
    </citation>
    <scope>NUCLEOTIDE SEQUENCE [LARGE SCALE GENOMIC DNA]</scope>
</reference>
<reference key="11">
    <citation type="submission" date="2005-09" db="EMBL/GenBank/DDBJ databases">
        <authorList>
            <person name="Mural R.J."/>
            <person name="Istrail S."/>
            <person name="Sutton G.G."/>
            <person name="Florea L."/>
            <person name="Halpern A.L."/>
            <person name="Mobarry C.M."/>
            <person name="Lippert R."/>
            <person name="Walenz B."/>
            <person name="Shatkay H."/>
            <person name="Dew I."/>
            <person name="Miller J.R."/>
            <person name="Flanigan M.J."/>
            <person name="Edwards N.J."/>
            <person name="Bolanos R."/>
            <person name="Fasulo D."/>
            <person name="Halldorsson B.V."/>
            <person name="Hannenhalli S."/>
            <person name="Turner R."/>
            <person name="Yooseph S."/>
            <person name="Lu F."/>
            <person name="Nusskern D.R."/>
            <person name="Shue B.C."/>
            <person name="Zheng X.H."/>
            <person name="Zhong F."/>
            <person name="Delcher A.L."/>
            <person name="Huson D.H."/>
            <person name="Kravitz S.A."/>
            <person name="Mouchard L."/>
            <person name="Reinert K."/>
            <person name="Remington K.A."/>
            <person name="Clark A.G."/>
            <person name="Waterman M.S."/>
            <person name="Eichler E.E."/>
            <person name="Adams M.D."/>
            <person name="Hunkapiller M.W."/>
            <person name="Myers E.W."/>
            <person name="Venter J.C."/>
        </authorList>
    </citation>
    <scope>NUCLEOTIDE SEQUENCE [LARGE SCALE GENOMIC DNA]</scope>
</reference>
<reference key="12">
    <citation type="journal article" date="2004" name="Genome Res.">
        <title>The status, quality, and expansion of the NIH full-length cDNA project: the Mammalian Gene Collection (MGC).</title>
        <authorList>
            <consortium name="The MGC Project Team"/>
        </authorList>
    </citation>
    <scope>NUCLEOTIDE SEQUENCE [LARGE SCALE MRNA] (ISOFORM 1)</scope>
    <source>
        <tissue>Skin</tissue>
    </source>
</reference>
<reference key="13">
    <citation type="journal article" date="1991" name="J. Invest. Dermatol.">
        <title>Isolation of cDNA for human epidermal type I transglutaminase.</title>
        <authorList>
            <person name="Polakowska R."/>
            <person name="Herting E."/>
            <person name="Goldsmith L.A."/>
        </authorList>
    </citation>
    <scope>NUCLEOTIDE SEQUENCE [MRNA] OF 6-551 (ISOFORM 1)</scope>
</reference>
<reference key="14">
    <citation type="journal article" date="1992" name="J. Invest. Dermatol.">
        <title>Type I keratinocyte transglutaminase: expression in human skin and psoriasis.</title>
        <authorList>
            <person name="Schroeder W."/>
            <person name="Thacher S."/>
            <person name="Stewart-Galetka S."/>
            <person name="Annarella M."/>
            <person name="Chema D."/>
            <person name="Sicliano M."/>
            <person name="Davies P."/>
            <person name="Tang H.Y."/>
            <person name="Sowa B."/>
            <person name="Duvic M."/>
        </authorList>
    </citation>
    <scope>NUCLEOTIDE SEQUENCE [MRNA] OF 375-817 (ISOFORM 1)</scope>
    <source>
        <tissue>Skin</tissue>
    </source>
</reference>
<reference key="15">
    <citation type="journal article" date="1996" name="Biochem. J.">
        <title>Identification of phosphorylation sites in keratinocyte transglutaminase.</title>
        <authorList>
            <person name="Rice R.H."/>
            <person name="Mehrpouyan M."/>
            <person name="Quin Q."/>
            <person name="Phillips M.A."/>
            <person name="Lee Y.M."/>
        </authorList>
    </citation>
    <scope>PHOSPHORYLATION AT SER-24; SER-82; SER-85 AND SER-92</scope>
</reference>
<reference key="16">
    <citation type="journal article" date="2008" name="J. Invest. Dermatol.">
        <title>Localization of the TIG3 transglutaminase interaction domain and demonstration that the amino-terminal region is required for TIG3 function as a keratinocyte differentiation regulator.</title>
        <authorList>
            <person name="Jans R."/>
            <person name="Sturniolo M.T."/>
            <person name="Eckert R.L."/>
        </authorList>
    </citation>
    <scope>SUBCELLULAR LOCATION</scope>
    <scope>INTERACTION WITH PLAAT4</scope>
    <scope>PALMITOYLATION</scope>
</reference>
<reference key="17">
    <citation type="submission" date="2011-01" db="PDB data bank">
        <title>Crystal structure of the human transglutaminase 1 beta-barrel domain.</title>
        <authorList>
            <consortium name="Structural genomics consortium (SGC)"/>
        </authorList>
    </citation>
    <scope>X-RAY CRYSTALLOGRAPHY (2.3 ANGSTROMS) OF 693-787</scope>
</reference>
<reference key="18">
    <citation type="journal article" date="1995" name="Science">
        <title>Mutations of keratinocyte transglutaminase in lamellar ichthyosis.</title>
        <authorList>
            <person name="Huber M."/>
            <person name="Rettler I."/>
            <person name="Bernasconi K."/>
            <person name="Frenk E."/>
            <person name="Lavrijsen S.P.M."/>
            <person name="Ponec M."/>
            <person name="Bon A."/>
            <person name="Lautenschlager S."/>
            <person name="Schorderet D.F."/>
            <person name="Hohl D."/>
        </authorList>
    </citation>
    <scope>VARIANTS ARCI1 TYR-42 AND GLN-323</scope>
    <scope>INVOLVEMENT IN ARC11</scope>
</reference>
<reference key="19">
    <citation type="journal article" date="1995" name="Nat. Genet.">
        <title>Mutations in the gene for transglutaminase 1 in autosomal recessive lamellar ichthyosis.</title>
        <authorList>
            <person name="Russell L.J."/>
            <person name="Digiovanna J.J."/>
            <person name="Rogers G.R."/>
            <person name="Steinert P.M."/>
            <person name="Hashem N."/>
            <person name="Compton J.G."/>
            <person name="Bale S.J."/>
        </authorList>
    </citation>
    <scope>VARIANTS ARCI1 HIS-142 AND HIS-143</scope>
</reference>
<reference key="20">
    <citation type="journal article" date="1997" name="Am. J. Hum. Genet.">
        <title>Transglutaminase 1 mutations in autosomal recessive congenital ichthyosis: private and recurrent mutations in an isolated population.</title>
        <authorList>
            <person name="Laiho E."/>
            <person name="Ignatius J."/>
            <person name="Mikkola H."/>
            <person name="Yee V.C."/>
            <person name="Teller D.C."/>
            <person name="Niemi K.-M."/>
            <person name="Saarialho-Kere U."/>
            <person name="Kere J."/>
            <person name="Palotie A."/>
        </authorList>
    </citation>
    <scope>VARIANTS ARCI1 HIS-142; CYS-143; SER-218; LEU-379 AND LEU-396</scope>
</reference>
<reference key="21">
    <citation type="journal article" date="2001" name="Br. J. Dermatol.">
        <title>Novel mutations of TGM1 in a child with congenital ichthyosiform erythroderma.</title>
        <authorList>
            <person name="Akiyama M."/>
            <person name="Takizawa Y."/>
            <person name="Kokaji T."/>
            <person name="Shimizu H."/>
        </authorList>
    </citation>
    <scope>VARIANT ARCI1 HIS-389</scope>
</reference>
<reference key="22">
    <citation type="journal article" date="2001" name="J. Invest. Dermatol.">
        <title>Novel mutations of the transglutaminase 1 gene in lamellar ichthyosis.</title>
        <authorList>
            <person name="Yang J.M."/>
            <person name="Ahn K.S."/>
            <person name="Cho M.O."/>
            <person name="Yoneda K."/>
            <person name="Lee C.H."/>
            <person name="Lee J.H."/>
            <person name="Lee E.S."/>
            <person name="Candi E."/>
            <person name="Melino G."/>
            <person name="Ahvazi B."/>
            <person name="Steinert P.M."/>
        </authorList>
    </citation>
    <scope>VARIANTS ARCI1 VAL-102; THR-289 AND TRP-307</scope>
</reference>
<reference key="23">
    <citation type="journal article" date="2009" name="Hum. Mutat.">
        <title>Transglutaminase-1 gene mutations in autosomal recessive congenital ichthyosis: summary of mutations (including 23 novel) and modeling of TGase-1.</title>
        <authorList>
            <person name="Herman M.L."/>
            <person name="Farasat S."/>
            <person name="Steinbach P.J."/>
            <person name="Wei M.H."/>
            <person name="Toure O."/>
            <person name="Fleckman P."/>
            <person name="Blake P."/>
            <person name="Bale S.J."/>
            <person name="Toro J.R."/>
        </authorList>
    </citation>
    <scope>VARIANTS ARCI1 SER-53; ASP-94; CYS-126; HIS-126; CYS-134; CYS-142; PRO-142; GLU-144; ARG-144; CYS-160; GLN-205; PHE-209; HIS-225; PRO-225; SER-243; LEU-249; GLN-264; TRP-264; PRO-272; ASN-276; ARG-278; LYS-285; GLN-286; VAL-293; PHE-304; CYS-315; HIS-315; LEU-315; TRP-323; HIS-330; PRO-331; ARG-342; ARG-358; MET-359; ASP-365; PRO-366; ARG-382; MET-383; PRO-389; ASP-392; HIS-396; SER-396; VAL-401; VAL-430; SER-473; GLY-490; GLY-520; CYS-544; CYS-687; HIS-687 AND CYS-764</scope>
</reference>
<reference key="24">
    <citation type="journal article" date="2010" name="J. Invest. Dermatol.">
        <title>Genotypic and clinical spectrum of self-improving collodion ichthyosis: ALOX12B, ALOXE3, and TGM1 mutations in Scandinavian patients.</title>
        <authorList>
            <person name="Vahlquist A."/>
            <person name="Bygum A."/>
            <person name="Gaanemo A."/>
            <person name="Virtanen M."/>
            <person name="Hellstroem-Pigg M."/>
            <person name="Strauss G."/>
            <person name="Brandrup F."/>
            <person name="Fischer J."/>
        </authorList>
    </citation>
    <scope>VARIANT ARCI1 GLY-307</scope>
</reference>
<reference key="25">
    <citation type="journal article" date="2016" name="Int. J. Dermatol.">
        <title>Identification and functional characterization of a novel transglutaminase 1 gene mutation associated with autosomal recessive congenital ichthyosis.</title>
        <authorList>
            <person name="Zhang S.Q."/>
            <person name="Li C.X."/>
            <person name="Gao X.Q."/>
            <person name="Qiu W.Y."/>
            <person name="Chen Q."/>
            <person name="Li X.M."/>
            <person name="Zhou X."/>
            <person name="Tian X."/>
            <person name="Tang Z.P."/>
            <person name="Zhao T."/>
            <person name="Zhang F."/>
            <person name="Zhang X.B."/>
        </authorList>
    </citation>
    <scope>VARIANTS ARCI1 CYS-143 AND PHE-212</scope>
    <scope>CHARACTERIZATION OF VARIANTS ARCI1 CYS-143 AND PHE-212</scope>
    <scope>FUNCTION</scope>
</reference>
<evidence type="ECO:0000250" key="1"/>
<evidence type="ECO:0000250" key="2">
    <source>
        <dbReference type="UniProtKB" id="P23606"/>
    </source>
</evidence>
<evidence type="ECO:0000250" key="3">
    <source>
        <dbReference type="UniProtKB" id="Q9JLF6"/>
    </source>
</evidence>
<evidence type="ECO:0000255" key="4">
    <source>
        <dbReference type="PROSITE-ProRule" id="PRU10024"/>
    </source>
</evidence>
<evidence type="ECO:0000256" key="5">
    <source>
        <dbReference type="SAM" id="MobiDB-lite"/>
    </source>
</evidence>
<evidence type="ECO:0000269" key="6">
    <source>
    </source>
</evidence>
<evidence type="ECO:0000269" key="7">
    <source>
    </source>
</evidence>
<evidence type="ECO:0000269" key="8">
    <source>
    </source>
</evidence>
<evidence type="ECO:0000269" key="9">
    <source>
    </source>
</evidence>
<evidence type="ECO:0000269" key="10">
    <source>
    </source>
</evidence>
<evidence type="ECO:0000269" key="11">
    <source>
    </source>
</evidence>
<evidence type="ECO:0000269" key="12">
    <source>
    </source>
</evidence>
<evidence type="ECO:0000269" key="13">
    <source>
    </source>
</evidence>
<evidence type="ECO:0000269" key="14">
    <source>
    </source>
</evidence>
<evidence type="ECO:0000269" key="15">
    <source>
    </source>
</evidence>
<evidence type="ECO:0000269" key="16">
    <source ref="9"/>
</evidence>
<evidence type="ECO:0000303" key="17">
    <source>
    </source>
</evidence>
<evidence type="ECO:0000305" key="18"/>
<evidence type="ECO:0000305" key="19">
    <source>
    </source>
</evidence>
<evidence type="ECO:0007829" key="20">
    <source>
        <dbReference type="PDB" id="2XZZ"/>
    </source>
</evidence>
<name>TGM1_HUMAN</name>
<proteinExistence type="evidence at protein level"/>
<dbReference type="EC" id="2.3.2.13"/>
<dbReference type="EMBL" id="M55183">
    <property type="protein sequence ID" value="AAA59474.1"/>
    <property type="molecule type" value="mRNA"/>
</dbReference>
<dbReference type="EMBL" id="D90287">
    <property type="protein sequence ID" value="BAA14329.1"/>
    <property type="molecule type" value="mRNA"/>
</dbReference>
<dbReference type="EMBL" id="M62925">
    <property type="protein sequence ID" value="AAA61166.1"/>
    <property type="status" value="ALT_FRAME"/>
    <property type="molecule type" value="mRNA"/>
</dbReference>
<dbReference type="EMBL" id="M83230">
    <property type="protein sequence ID" value="AAA61156.1"/>
    <property type="molecule type" value="Genomic_DNA"/>
</dbReference>
<dbReference type="EMBL" id="M83227">
    <property type="protein sequence ID" value="AAA61156.1"/>
    <property type="status" value="JOINED"/>
    <property type="molecule type" value="Genomic_DNA"/>
</dbReference>
<dbReference type="EMBL" id="M83228">
    <property type="protein sequence ID" value="AAA61156.1"/>
    <property type="status" value="JOINED"/>
    <property type="molecule type" value="Genomic_DNA"/>
</dbReference>
<dbReference type="EMBL" id="M83229">
    <property type="protein sequence ID" value="AAA61156.1"/>
    <property type="status" value="JOINED"/>
    <property type="molecule type" value="Genomic_DNA"/>
</dbReference>
<dbReference type="EMBL" id="M86360">
    <property type="status" value="NOT_ANNOTATED_CDS"/>
    <property type="molecule type" value="Genomic_DNA"/>
</dbReference>
<dbReference type="EMBL" id="D10353">
    <property type="protein sequence ID" value="BAA34203.1"/>
    <property type="molecule type" value="Genomic_DNA"/>
</dbReference>
<dbReference type="EMBL" id="M98447">
    <property type="protein sequence ID" value="AAA96667.1"/>
    <property type="molecule type" value="Genomic_DNA"/>
</dbReference>
<dbReference type="EMBL" id="AK301652">
    <property type="protein sequence ID" value="BAG63129.1"/>
    <property type="molecule type" value="mRNA"/>
</dbReference>
<dbReference type="EMBL" id="AK315843">
    <property type="protein sequence ID" value="BAF98734.1"/>
    <property type="molecule type" value="mRNA"/>
</dbReference>
<dbReference type="EMBL" id="DQ640500">
    <property type="protein sequence ID" value="ABF70204.1"/>
    <property type="molecule type" value="Genomic_DNA"/>
</dbReference>
<dbReference type="EMBL" id="AL096870">
    <property type="status" value="NOT_ANNOTATED_CDS"/>
    <property type="molecule type" value="Genomic_DNA"/>
</dbReference>
<dbReference type="EMBL" id="CH471078">
    <property type="protein sequence ID" value="EAW66047.1"/>
    <property type="molecule type" value="Genomic_DNA"/>
</dbReference>
<dbReference type="EMBL" id="BC034699">
    <property type="protein sequence ID" value="AAH34699.1"/>
    <property type="molecule type" value="mRNA"/>
</dbReference>
<dbReference type="EMBL" id="X57974">
    <property type="protein sequence ID" value="CAA41040.1"/>
    <property type="molecule type" value="mRNA"/>
</dbReference>
<dbReference type="CCDS" id="CCDS9622.1">
    <molecule id="P22735-1"/>
</dbReference>
<dbReference type="PIR" id="A43401">
    <property type="entry name" value="TGHUM1"/>
</dbReference>
<dbReference type="RefSeq" id="NP_000350.1">
    <molecule id="P22735-1"/>
    <property type="nucleotide sequence ID" value="NM_000359.3"/>
</dbReference>
<dbReference type="PDB" id="2XZZ">
    <property type="method" value="X-ray"/>
    <property type="resolution" value="2.30 A"/>
    <property type="chains" value="A=693-787"/>
</dbReference>
<dbReference type="PDBsum" id="2XZZ"/>
<dbReference type="SMR" id="P22735"/>
<dbReference type="BioGRID" id="112909">
    <property type="interactions" value="275"/>
</dbReference>
<dbReference type="FunCoup" id="P22735">
    <property type="interactions" value="595"/>
</dbReference>
<dbReference type="IntAct" id="P22735">
    <property type="interactions" value="194"/>
</dbReference>
<dbReference type="MINT" id="P22735"/>
<dbReference type="STRING" id="9606.ENSP00000206765"/>
<dbReference type="BindingDB" id="P22735"/>
<dbReference type="ChEMBL" id="CHEMBL2810"/>
<dbReference type="DrugBank" id="DB00130">
    <property type="generic name" value="L-Glutamine"/>
</dbReference>
<dbReference type="CarbonylDB" id="P22735"/>
<dbReference type="GlyGen" id="P22735">
    <property type="glycosylation" value="1 site, 1 O-linked glycan (1 site)"/>
</dbReference>
<dbReference type="iPTMnet" id="P22735"/>
<dbReference type="PhosphoSitePlus" id="P22735"/>
<dbReference type="SwissPalm" id="P22735"/>
<dbReference type="BioMuta" id="TGM1"/>
<dbReference type="DMDM" id="57015359"/>
<dbReference type="jPOST" id="P22735"/>
<dbReference type="MassIVE" id="P22735"/>
<dbReference type="PaxDb" id="9606-ENSP00000206765"/>
<dbReference type="PeptideAtlas" id="P22735"/>
<dbReference type="PRIDE" id="P22735"/>
<dbReference type="ProteomicsDB" id="5372"/>
<dbReference type="ProteomicsDB" id="54031">
    <molecule id="P22735-1"/>
</dbReference>
<dbReference type="Antibodypedia" id="4193">
    <property type="antibodies" value="284 antibodies from 33 providers"/>
</dbReference>
<dbReference type="DNASU" id="7051"/>
<dbReference type="Ensembl" id="ENST00000206765.11">
    <molecule id="P22735-1"/>
    <property type="protein sequence ID" value="ENSP00000206765.6"/>
    <property type="gene ID" value="ENSG00000092295.12"/>
</dbReference>
<dbReference type="Ensembl" id="ENST00000544573.5">
    <molecule id="P22735-2"/>
    <property type="protein sequence ID" value="ENSP00000439446.1"/>
    <property type="gene ID" value="ENSG00000092295.12"/>
</dbReference>
<dbReference type="Ensembl" id="ENST00000642845.2">
    <molecule id="P22735-1"/>
    <property type="protein sequence ID" value="ENSP00000493587.1"/>
    <property type="gene ID" value="ENSG00000285348.2"/>
</dbReference>
<dbReference type="Ensembl" id="ENST00000646057.1">
    <molecule id="P22735-2"/>
    <property type="protein sequence ID" value="ENSP00000496483.1"/>
    <property type="gene ID" value="ENSG00000285348.2"/>
</dbReference>
<dbReference type="GeneID" id="7051"/>
<dbReference type="KEGG" id="hsa:7051"/>
<dbReference type="MANE-Select" id="ENST00000206765.11">
    <property type="protein sequence ID" value="ENSP00000206765.6"/>
    <property type="RefSeq nucleotide sequence ID" value="NM_000359.3"/>
    <property type="RefSeq protein sequence ID" value="NP_000350.1"/>
</dbReference>
<dbReference type="UCSC" id="uc001wod.3">
    <molecule id="P22735-1"/>
    <property type="organism name" value="human"/>
</dbReference>
<dbReference type="AGR" id="HGNC:11777"/>
<dbReference type="CTD" id="7051"/>
<dbReference type="DisGeNET" id="7051"/>
<dbReference type="GeneCards" id="TGM1"/>
<dbReference type="GeneReviews" id="TGM1"/>
<dbReference type="HGNC" id="HGNC:11777">
    <property type="gene designation" value="TGM1"/>
</dbReference>
<dbReference type="HPA" id="ENSG00000092295">
    <property type="expression patterns" value="Tissue enriched (esophagus)"/>
</dbReference>
<dbReference type="MalaCards" id="TGM1"/>
<dbReference type="MIM" id="190195">
    <property type="type" value="gene"/>
</dbReference>
<dbReference type="MIM" id="242300">
    <property type="type" value="phenotype"/>
</dbReference>
<dbReference type="neXtProt" id="NX_P22735"/>
<dbReference type="OpenTargets" id="ENSG00000092295"/>
<dbReference type="Orphanet" id="281127">
    <property type="disease" value="Acral self-healing collodion baby"/>
</dbReference>
<dbReference type="Orphanet" id="100976">
    <property type="disease" value="Bathing suit ichthyosis"/>
</dbReference>
<dbReference type="Orphanet" id="79394">
    <property type="disease" value="Congenital ichthyosiform erythroderma"/>
</dbReference>
<dbReference type="Orphanet" id="313">
    <property type="disease" value="Lamellar ichthyosis"/>
</dbReference>
<dbReference type="Orphanet" id="281122">
    <property type="disease" value="Self-improving collodion baby"/>
</dbReference>
<dbReference type="PharmGKB" id="PA36490"/>
<dbReference type="VEuPathDB" id="HostDB:ENSG00000092295"/>
<dbReference type="eggNOG" id="ENOG502QQ46">
    <property type="taxonomic scope" value="Eukaryota"/>
</dbReference>
<dbReference type="GeneTree" id="ENSGT01050000244939"/>
<dbReference type="HOGENOM" id="CLU_013435_0_2_1"/>
<dbReference type="InParanoid" id="P22735"/>
<dbReference type="OMA" id="WSGNYSD"/>
<dbReference type="OrthoDB" id="437511at2759"/>
<dbReference type="PAN-GO" id="P22735">
    <property type="GO annotations" value="2 GO annotations based on evolutionary models"/>
</dbReference>
<dbReference type="PhylomeDB" id="P22735"/>
<dbReference type="TreeFam" id="TF324278"/>
<dbReference type="BioCyc" id="MetaCyc:HS01767-MONOMER"/>
<dbReference type="BRENDA" id="2.3.2.13">
    <property type="organism ID" value="2681"/>
</dbReference>
<dbReference type="PathwayCommons" id="P22735"/>
<dbReference type="Reactome" id="R-HSA-6809371">
    <property type="pathway name" value="Formation of the cornified envelope"/>
</dbReference>
<dbReference type="SignaLink" id="P22735"/>
<dbReference type="SIGNOR" id="P22735"/>
<dbReference type="BioGRID-ORCS" id="7051">
    <property type="hits" value="13 hits in 1146 CRISPR screens"/>
</dbReference>
<dbReference type="ChiTaRS" id="TGM1">
    <property type="organism name" value="human"/>
</dbReference>
<dbReference type="EvolutionaryTrace" id="P22735"/>
<dbReference type="GeneWiki" id="Keratinocyte_transglutaminase"/>
<dbReference type="GenomeRNAi" id="7051"/>
<dbReference type="Pharos" id="P22735">
    <property type="development level" value="Tchem"/>
</dbReference>
<dbReference type="PRO" id="PR:P22735"/>
<dbReference type="Proteomes" id="UP000005640">
    <property type="component" value="Chromosome 14"/>
</dbReference>
<dbReference type="RNAct" id="P22735">
    <property type="molecule type" value="protein"/>
</dbReference>
<dbReference type="Bgee" id="ENSG00000092295">
    <property type="expression patterns" value="Expressed in lower esophagus mucosa and 97 other cell types or tissues"/>
</dbReference>
<dbReference type="ExpressionAtlas" id="P22735">
    <property type="expression patterns" value="baseline and differential"/>
</dbReference>
<dbReference type="GO" id="GO:0001533">
    <property type="term" value="C:cornified envelope"/>
    <property type="evidence" value="ECO:0000304"/>
    <property type="project" value="UniProtKB"/>
</dbReference>
<dbReference type="GO" id="GO:0005829">
    <property type="term" value="C:cytosol"/>
    <property type="evidence" value="ECO:0000304"/>
    <property type="project" value="Reactome"/>
</dbReference>
<dbReference type="GO" id="GO:0070062">
    <property type="term" value="C:extracellular exosome"/>
    <property type="evidence" value="ECO:0007005"/>
    <property type="project" value="UniProtKB"/>
</dbReference>
<dbReference type="GO" id="GO:0016020">
    <property type="term" value="C:membrane"/>
    <property type="evidence" value="ECO:0000314"/>
    <property type="project" value="UniProtKB"/>
</dbReference>
<dbReference type="GO" id="GO:0005886">
    <property type="term" value="C:plasma membrane"/>
    <property type="evidence" value="ECO:0000304"/>
    <property type="project" value="Reactome"/>
</dbReference>
<dbReference type="GO" id="GO:0042802">
    <property type="term" value="F:identical protein binding"/>
    <property type="evidence" value="ECO:0000353"/>
    <property type="project" value="IntAct"/>
</dbReference>
<dbReference type="GO" id="GO:0046872">
    <property type="term" value="F:metal ion binding"/>
    <property type="evidence" value="ECO:0007669"/>
    <property type="project" value="UniProtKB-KW"/>
</dbReference>
<dbReference type="GO" id="GO:0003810">
    <property type="term" value="F:protein-glutamine gamma-glutamyltransferase activity"/>
    <property type="evidence" value="ECO:0000314"/>
    <property type="project" value="UniProtKB"/>
</dbReference>
<dbReference type="GO" id="GO:0043163">
    <property type="term" value="P:cell envelope organization"/>
    <property type="evidence" value="ECO:0000304"/>
    <property type="project" value="UniProtKB"/>
</dbReference>
<dbReference type="GO" id="GO:0031424">
    <property type="term" value="P:keratinization"/>
    <property type="evidence" value="ECO:0007669"/>
    <property type="project" value="UniProtKB-KW"/>
</dbReference>
<dbReference type="GO" id="GO:0030216">
    <property type="term" value="P:keratinocyte differentiation"/>
    <property type="evidence" value="ECO:0000314"/>
    <property type="project" value="UniProtKB"/>
</dbReference>
<dbReference type="GO" id="GO:0018149">
    <property type="term" value="P:peptide cross-linking"/>
    <property type="evidence" value="ECO:0000314"/>
    <property type="project" value="CAFA"/>
</dbReference>
<dbReference type="GO" id="GO:0045787">
    <property type="term" value="P:positive regulation of cell cycle"/>
    <property type="evidence" value="ECO:0000315"/>
    <property type="project" value="UniProtKB"/>
</dbReference>
<dbReference type="GO" id="GO:0010838">
    <property type="term" value="P:positive regulation of keratinocyte proliferation"/>
    <property type="evidence" value="ECO:0000315"/>
    <property type="project" value="UniProtKB"/>
</dbReference>
<dbReference type="GO" id="GO:0036211">
    <property type="term" value="P:protein modification process"/>
    <property type="evidence" value="ECO:0000303"/>
    <property type="project" value="UniProtKB"/>
</dbReference>
<dbReference type="FunFam" id="2.60.40.10:FF:000090">
    <property type="entry name" value="Protein-glutamine gamma-glutamyltransferase 2"/>
    <property type="match status" value="1"/>
</dbReference>
<dbReference type="FunFam" id="3.90.260.10:FF:000001">
    <property type="entry name" value="Protein-glutamine gamma-glutamyltransferase 2"/>
    <property type="match status" value="1"/>
</dbReference>
<dbReference type="FunFam" id="2.60.40.10:FF:000171">
    <property type="entry name" value="protein-glutamine gamma-glutamyltransferase 6"/>
    <property type="match status" value="1"/>
</dbReference>
<dbReference type="FunFam" id="2.60.40.10:FF:001143">
    <property type="entry name" value="Protein-glutamine gamma-glutamyltransferase K"/>
    <property type="match status" value="1"/>
</dbReference>
<dbReference type="Gene3D" id="2.60.40.10">
    <property type="entry name" value="Immunoglobulins"/>
    <property type="match status" value="3"/>
</dbReference>
<dbReference type="Gene3D" id="3.90.260.10">
    <property type="entry name" value="Transglutaminase-like"/>
    <property type="match status" value="1"/>
</dbReference>
<dbReference type="InterPro" id="IPR013783">
    <property type="entry name" value="Ig-like_fold"/>
</dbReference>
<dbReference type="InterPro" id="IPR014756">
    <property type="entry name" value="Ig_E-set"/>
</dbReference>
<dbReference type="InterPro" id="IPR038765">
    <property type="entry name" value="Papain-like_cys_pep_sf"/>
</dbReference>
<dbReference type="InterPro" id="IPR050779">
    <property type="entry name" value="Transglutaminase"/>
</dbReference>
<dbReference type="InterPro" id="IPR002931">
    <property type="entry name" value="Transglutaminase-like"/>
</dbReference>
<dbReference type="InterPro" id="IPR036985">
    <property type="entry name" value="Transglutaminase-like_sf"/>
</dbReference>
<dbReference type="InterPro" id="IPR023608">
    <property type="entry name" value="Transglutaminase_animal"/>
</dbReference>
<dbReference type="InterPro" id="IPR013808">
    <property type="entry name" value="Transglutaminase_AS"/>
</dbReference>
<dbReference type="InterPro" id="IPR008958">
    <property type="entry name" value="Transglutaminase_C"/>
</dbReference>
<dbReference type="InterPro" id="IPR036238">
    <property type="entry name" value="Transglutaminase_C_sf"/>
</dbReference>
<dbReference type="InterPro" id="IPR001102">
    <property type="entry name" value="Transglutaminase_N"/>
</dbReference>
<dbReference type="PANTHER" id="PTHR11590">
    <property type="entry name" value="PROTEIN-GLUTAMINE GAMMA-GLUTAMYLTRANSFERASE"/>
    <property type="match status" value="1"/>
</dbReference>
<dbReference type="PANTHER" id="PTHR11590:SF49">
    <property type="entry name" value="PROTEIN-GLUTAMINE GAMMA-GLUTAMYLTRANSFERASE K"/>
    <property type="match status" value="1"/>
</dbReference>
<dbReference type="Pfam" id="PF00927">
    <property type="entry name" value="Transglut_C"/>
    <property type="match status" value="2"/>
</dbReference>
<dbReference type="Pfam" id="PF01841">
    <property type="entry name" value="Transglut_core"/>
    <property type="match status" value="1"/>
</dbReference>
<dbReference type="Pfam" id="PF00868">
    <property type="entry name" value="Transglut_N"/>
    <property type="match status" value="1"/>
</dbReference>
<dbReference type="PIRSF" id="PIRSF000459">
    <property type="entry name" value="TGM_EBP42"/>
    <property type="match status" value="1"/>
</dbReference>
<dbReference type="SMART" id="SM00460">
    <property type="entry name" value="TGc"/>
    <property type="match status" value="1"/>
</dbReference>
<dbReference type="SUPFAM" id="SSF54001">
    <property type="entry name" value="Cysteine proteinases"/>
    <property type="match status" value="1"/>
</dbReference>
<dbReference type="SUPFAM" id="SSF81296">
    <property type="entry name" value="E set domains"/>
    <property type="match status" value="1"/>
</dbReference>
<dbReference type="SUPFAM" id="SSF49309">
    <property type="entry name" value="Transglutaminase, two C-terminal domains"/>
    <property type="match status" value="2"/>
</dbReference>
<dbReference type="PROSITE" id="PS00547">
    <property type="entry name" value="TRANSGLUTAMINASES"/>
    <property type="match status" value="1"/>
</dbReference>
<comment type="function">
    <text evidence="11">Catalyzes the cross-linking of proteins and the conjugation of polyamines to proteins. Responsible for cross-linking epidermal proteins during formation of the stratum corneum. Involved in cell proliferation (PubMed:26220141).</text>
</comment>
<comment type="catalytic activity">
    <reaction evidence="4">
        <text>L-glutaminyl-[protein] + L-lysyl-[protein] = [protein]-L-lysyl-N(6)-5-L-glutamyl-[protein] + NH4(+)</text>
        <dbReference type="Rhea" id="RHEA:54816"/>
        <dbReference type="Rhea" id="RHEA-COMP:9752"/>
        <dbReference type="Rhea" id="RHEA-COMP:10207"/>
        <dbReference type="Rhea" id="RHEA-COMP:14005"/>
        <dbReference type="ChEBI" id="CHEBI:28938"/>
        <dbReference type="ChEBI" id="CHEBI:29969"/>
        <dbReference type="ChEBI" id="CHEBI:30011"/>
        <dbReference type="ChEBI" id="CHEBI:138370"/>
        <dbReference type="EC" id="2.3.2.13"/>
    </reaction>
</comment>
<comment type="cofactor">
    <cofactor>
        <name>Ca(2+)</name>
        <dbReference type="ChEBI" id="CHEBI:29108"/>
    </cofactor>
    <text>Binds 1 Ca(2+) ion per subunit.</text>
</comment>
<comment type="subunit">
    <text evidence="8">Interacts with PLAAT4.</text>
</comment>
<comment type="interaction">
    <interactant intactId="EBI-2562368">
        <id>P22735</id>
    </interactant>
    <interactant intactId="EBI-12059321">
        <id>P28330</id>
        <label>ACADL</label>
    </interactant>
    <organismsDiffer>false</organismsDiffer>
    <experiments>3</experiments>
</comment>
<comment type="interaction">
    <interactant intactId="EBI-2562368">
        <id>P22735</id>
    </interactant>
    <interactant intactId="EBI-1211484">
        <id>P05187</id>
        <label>ALPP</label>
    </interactant>
    <organismsDiffer>false</organismsDiffer>
    <experiments>3</experiments>
</comment>
<comment type="interaction">
    <interactant intactId="EBI-2562368">
        <id>P22735</id>
    </interactant>
    <interactant intactId="EBI-11536642">
        <id>Q9BXJ1-2</id>
        <label>C1QTNF1</label>
    </interactant>
    <organismsDiffer>false</organismsDiffer>
    <experiments>6</experiments>
</comment>
<comment type="interaction">
    <interactant intactId="EBI-2562368">
        <id>P22735</id>
    </interactant>
    <interactant intactId="EBI-718729">
        <id>P55212</id>
        <label>CASP6</label>
    </interactant>
    <organismsDiffer>false</organismsDiffer>
    <experiments>3</experiments>
</comment>
<comment type="interaction">
    <interactant intactId="EBI-2562368">
        <id>P22735</id>
    </interactant>
    <interactant intactId="EBI-741032">
        <id>Q8NE01</id>
        <label>CNNM3</label>
    </interactant>
    <organismsDiffer>false</organismsDiffer>
    <experiments>3</experiments>
</comment>
<comment type="interaction">
    <interactant intactId="EBI-2562368">
        <id>P22735</id>
    </interactant>
    <interactant intactId="EBI-713677">
        <id>Q9UGL9</id>
        <label>CRCT1</label>
    </interactant>
    <organismsDiffer>false</organismsDiffer>
    <experiments>3</experiments>
</comment>
<comment type="interaction">
    <interactant intactId="EBI-2562368">
        <id>P22735</id>
    </interactant>
    <interactant intactId="EBI-448771">
        <id>Q92608</id>
        <label>DOCK2</label>
    </interactant>
    <organismsDiffer>false</organismsDiffer>
    <experiments>3</experiments>
</comment>
<comment type="interaction">
    <interactant intactId="EBI-2562368">
        <id>P22735</id>
    </interactant>
    <interactant intactId="EBI-353467">
        <id>P09211</id>
        <label>GSTP1</label>
    </interactant>
    <organismsDiffer>false</organismsDiffer>
    <experiments>3</experiments>
</comment>
<comment type="interaction">
    <interactant intactId="EBI-2562368">
        <id>P22735</id>
    </interactant>
    <interactant intactId="EBI-2868897">
        <id>P13284</id>
        <label>IFI30</label>
    </interactant>
    <organismsDiffer>false</organismsDiffer>
    <experiments>3</experiments>
</comment>
<comment type="interaction">
    <interactant intactId="EBI-2562368">
        <id>P22735</id>
    </interactant>
    <interactant intactId="EBI-8293590">
        <id>Q969P0</id>
        <label>IGSF8</label>
    </interactant>
    <organismsDiffer>false</organismsDiffer>
    <experiments>3</experiments>
</comment>
<comment type="interaction">
    <interactant intactId="EBI-2562368">
        <id>P22735</id>
    </interactant>
    <interactant intactId="EBI-11051601">
        <id>P16144-2</id>
        <label>ITGB4</label>
    </interactant>
    <organismsDiffer>false</organismsDiffer>
    <experiments>3</experiments>
</comment>
<comment type="interaction">
    <interactant intactId="EBI-2562368">
        <id>P22735</id>
    </interactant>
    <interactant intactId="EBI-2510602">
        <id>Q15040</id>
        <label>JOSD1</label>
    </interactant>
    <organismsDiffer>false</organismsDiffer>
    <experiments>3</experiments>
</comment>
<comment type="interaction">
    <interactant intactId="EBI-2562368">
        <id>P22735</id>
    </interactant>
    <interactant intactId="EBI-739863">
        <id>Q9BQ66</id>
        <label>KRTAP4-12</label>
    </interactant>
    <organismsDiffer>false</organismsDiffer>
    <experiments>3</experiments>
</comment>
<comment type="interaction">
    <interactant intactId="EBI-2562368">
        <id>P22735</id>
    </interactant>
    <interactant intactId="EBI-3958099">
        <id>P26371</id>
        <label>KRTAP5-9</label>
    </interactant>
    <organismsDiffer>false</organismsDiffer>
    <experiments>3</experiments>
</comment>
<comment type="interaction">
    <interactant intactId="EBI-2562368">
        <id>P22735</id>
    </interactant>
    <interactant intactId="EBI-21591415">
        <id>P13473-2</id>
        <label>LAMP2</label>
    </interactant>
    <organismsDiffer>false</organismsDiffer>
    <experiments>3</experiments>
</comment>
<comment type="interaction">
    <interactant intactId="EBI-2562368">
        <id>P22735</id>
    </interactant>
    <interactant intactId="EBI-10245913">
        <id>Q5T7P3</id>
        <label>LCE1B</label>
    </interactant>
    <organismsDiffer>false</organismsDiffer>
    <experiments>3</experiments>
</comment>
<comment type="interaction">
    <interactant intactId="EBI-2562368">
        <id>P22735</id>
    </interactant>
    <interactant intactId="EBI-11955335">
        <id>Q5T753</id>
        <label>LCE1E</label>
    </interactant>
    <organismsDiffer>false</organismsDiffer>
    <experiments>3</experiments>
</comment>
<comment type="interaction">
    <interactant intactId="EBI-2562368">
        <id>P22735</id>
    </interactant>
    <interactant intactId="EBI-9394625">
        <id>Q5TA76</id>
        <label>LCE3A</label>
    </interactant>
    <organismsDiffer>false</organismsDiffer>
    <experiments>3</experiments>
</comment>
<comment type="interaction">
    <interactant intactId="EBI-2562368">
        <id>P22735</id>
    </interactant>
    <interactant intactId="EBI-10246358">
        <id>Q5TA78</id>
        <label>LCE4A</label>
    </interactant>
    <organismsDiffer>false</organismsDiffer>
    <experiments>3</experiments>
</comment>
<comment type="interaction">
    <interactant intactId="EBI-2562368">
        <id>P22735</id>
    </interactant>
    <interactant intactId="EBI-2858213">
        <id>Q86VE0</id>
        <label>MYPOP</label>
    </interactant>
    <organismsDiffer>false</organismsDiffer>
    <experiments>3</experiments>
</comment>
<comment type="interaction">
    <interactant intactId="EBI-2562368">
        <id>P22735</id>
    </interactant>
    <interactant intactId="EBI-6979889">
        <id>Q92692-2</id>
        <label>NECTIN2</label>
    </interactant>
    <organismsDiffer>false</organismsDiffer>
    <experiments>3</experiments>
</comment>
<comment type="interaction">
    <interactant intactId="EBI-2562368">
        <id>P22735</id>
    </interactant>
    <interactant intactId="EBI-1048886">
        <id>Q9Y5Y2</id>
        <label>NUBP2</label>
    </interactant>
    <organismsDiffer>false</organismsDiffer>
    <experiments>3</experiments>
</comment>
<comment type="interaction">
    <interactant intactId="EBI-2562368">
        <id>P22735</id>
    </interactant>
    <interactant intactId="EBI-5280197">
        <id>O75400-2</id>
        <label>PRPF40A</label>
    </interactant>
    <organismsDiffer>false</organismsDiffer>
    <experiments>3</experiments>
</comment>
<comment type="interaction">
    <interactant intactId="EBI-2562368">
        <id>P22735</id>
    </interactant>
    <interactant intactId="EBI-12056025">
        <id>Q14162</id>
        <label>SCARF1</label>
    </interactant>
    <organismsDiffer>false</organismsDiffer>
    <experiments>3</experiments>
</comment>
<comment type="interaction">
    <interactant intactId="EBI-2562368">
        <id>P22735</id>
    </interactant>
    <interactant intactId="EBI-2623095">
        <id>Q9Y371</id>
        <label>SH3GLB1</label>
    </interactant>
    <organismsDiffer>false</organismsDiffer>
    <experiments>3</experiments>
</comment>
<comment type="interaction">
    <interactant intactId="EBI-2562368">
        <id>P22735</id>
    </interactant>
    <interactant intactId="EBI-6690555">
        <id>Q9BR01</id>
        <label>SULT4A1</label>
    </interactant>
    <organismsDiffer>false</organismsDiffer>
    <experiments>3</experiments>
</comment>
<comment type="interaction">
    <interactant intactId="EBI-2562368">
        <id>P22735</id>
    </interactant>
    <interactant intactId="EBI-14211313">
        <id>B2RWP4</id>
        <label>TACC2</label>
    </interactant>
    <organismsDiffer>false</organismsDiffer>
    <experiments>3</experiments>
</comment>
<comment type="interaction">
    <interactant intactId="EBI-2562368">
        <id>P22735</id>
    </interactant>
    <interactant intactId="EBI-2562368">
        <id>P22735</id>
        <label>TGM1</label>
    </interactant>
    <organismsDiffer>false</organismsDiffer>
    <experiments>3</experiments>
</comment>
<comment type="interaction">
    <interactant intactId="EBI-2562368">
        <id>P22735</id>
    </interactant>
    <interactant intactId="EBI-719893">
        <id>Q8WVR3</id>
        <label>TRAPPC14</label>
    </interactant>
    <organismsDiffer>false</organismsDiffer>
    <experiments>3</experiments>
</comment>
<comment type="interaction">
    <interactant intactId="EBI-2562368">
        <id>P22735</id>
    </interactant>
    <interactant intactId="EBI-10249550">
        <id>Q6EMK4</id>
        <label>VASN</label>
    </interactant>
    <organismsDiffer>false</organismsDiffer>
    <experiments>3</experiments>
</comment>
<comment type="interaction">
    <interactant intactId="EBI-2562368">
        <id>P22735</id>
    </interactant>
    <interactant intactId="EBI-4311759">
        <id>Q8IW00</id>
        <label>VSTM4</label>
    </interactant>
    <organismsDiffer>false</organismsDiffer>
    <experiments>3</experiments>
</comment>
<comment type="subcellular location">
    <subcellularLocation>
        <location evidence="8">Membrane</location>
        <topology evidence="19">Lipid-anchor</topology>
    </subcellularLocation>
</comment>
<comment type="alternative products">
    <event type="alternative splicing"/>
    <isoform>
        <id>P22735-1</id>
        <name>1</name>
        <sequence type="displayed"/>
    </isoform>
    <isoform>
        <id>P22735-2</id>
        <name>2</name>
        <sequence type="described" ref="VSP_056840"/>
    </isoform>
</comment>
<comment type="PTM">
    <text evidence="8">Palmitoylated.</text>
</comment>
<comment type="PTM">
    <text evidence="14">The membrane anchorage region possesses a cluster of five cysteines within which fatty acid(s) may become thioester-linked. It is subject to phorbol ester-stimulated phosphorylation and is hypersensitive to proteolysis, which releases the enzyme in a soluble form.</text>
</comment>
<comment type="PTM">
    <text evidence="3">Tyrosine-phosphorylated.</text>
</comment>
<comment type="disease" evidence="6 7 9 10 11 12 13 15">
    <disease id="DI-01230">
        <name>Ichthyosis, congenital, autosomal recessive 1</name>
        <acronym>ARCI1</acronym>
        <description>A form of autosomal recessive congenital ichthyosis, a disorder of keratinization with abnormal differentiation and desquamation of the epidermis, resulting in abnormal skin scaling over the whole body. The main skin phenotypes are lamellar ichthyosis (LI) and non-bullous congenital ichthyosiform erythroderma (NCIE), although phenotypic overlap within the same patient or among patients from the same family can occur. Lamellar ichthyosis is a condition often associated with an embedment in a collodion-like membrane at birth; skin scales later develop, covering the entire body surface. Non-bullous congenital ichthyosiform erythroderma characterized by fine whitish scaling on an erythrodermal background; larger brownish scales are present on the buttocks, neck and legs.</description>
        <dbReference type="MIM" id="242300"/>
    </disease>
    <text>The disease is caused by variants affecting the gene represented in this entry.</text>
</comment>
<comment type="similarity">
    <text evidence="18">Belongs to the transglutaminase superfamily. Transglutaminase family.</text>
</comment>
<comment type="sequence caution" evidence="18">
    <conflict type="frameshift">
        <sequence resource="EMBL-CDS" id="AAA61166"/>
    </conflict>
</comment>
<comment type="sequence caution" evidence="18">
    <conflict type="frameshift">
        <sequence resource="EMBL" id="M86360"/>
    </conflict>
</comment>
<gene>
    <name type="primary">TGM1</name>
    <name type="synonym">KTG</name>
</gene>
<protein>
    <recommendedName>
        <fullName>Protein-glutamine gamma-glutamyltransferase K</fullName>
        <ecNumber>2.3.2.13</ecNumber>
    </recommendedName>
    <alternativeName>
        <fullName>Epidermal TGase</fullName>
    </alternativeName>
    <alternativeName>
        <fullName>Transglutaminase K</fullName>
        <shortName>TG(K)</shortName>
        <shortName>TGK</shortName>
        <shortName>TGase K</shortName>
    </alternativeName>
    <alternativeName>
        <fullName>Transglutaminase-1</fullName>
        <shortName>TGase-1</shortName>
    </alternativeName>
</protein>
<accession>P22735</accession>
<accession>B4DWR7</accession>
<accession>Q197M4</accession>
<organism>
    <name type="scientific">Homo sapiens</name>
    <name type="common">Human</name>
    <dbReference type="NCBI Taxonomy" id="9606"/>
    <lineage>
        <taxon>Eukaryota</taxon>
        <taxon>Metazoa</taxon>
        <taxon>Chordata</taxon>
        <taxon>Craniata</taxon>
        <taxon>Vertebrata</taxon>
        <taxon>Euteleostomi</taxon>
        <taxon>Mammalia</taxon>
        <taxon>Eutheria</taxon>
        <taxon>Euarchontoglires</taxon>
        <taxon>Primates</taxon>
        <taxon>Haplorrhini</taxon>
        <taxon>Catarrhini</taxon>
        <taxon>Hominidae</taxon>
        <taxon>Homo</taxon>
    </lineage>
</organism>
<sequence>MMDGPRSDVGRWGGNPLQPPTTPSPEPEPEPDGRSRRGGGRSFWARCCGCCSCRNAADDDWGPEPSDSRGRGSSSGTRRPGSRGSDSRRPVSRGSGVNAAGDGTIREGMLVVNGVDLLSSRSDQNRREHHTDEYEYDELIVRRGQPFHMLLLLSRTYESSDRITLELLIGNNPEVGKGTHVIIPVGKGGSGGWKAQVVKASGQNLNLRVHTSPNAIIGKFQFTVRTQSDAGEFQLPFDPRNEIYILFNPWCPEDIVYVDHEDWRQEYVLNESGRIYYGTEAQIGERTWNYGQFDHGVLDACLYILDRRGMPYGGRGDPVNVSRVISAMVNSLDDNGVLIGNWSGDYSRGTNPSAWVGSVEILLSYLRTGYSVPYGQCWVFAGVTTTVLRCLGLATRTVTNFNSAHDTDTSLTMDIYFDENMKPLEHLNHDSVWNFHVWNDCWMKRPDLPSGFDGWQVVDATPQETSSGIFCCGPCSVESIKNGLVYMKYDTPFIFAEVNSDKVYWQRQDDGSFKIVYVEEKAIGTLIVTKAISSNMREDITYLYKHPEGSDAERKAVETAAAHGSKPNVYANRGSAEDVAMQVEAQDAVMGQDLMVSVMLINHSSSRRTVKLHLYLSVTFYTGVSGTIFKETKKEVELAPGASDRVTMPVAYKEYRPHLVDQGAMLLNVSGHVKESGQVLAKQHTFRLRTPDLSLTLLGAAVVGQECEVQIVFKNPLPVTLTNVVFRLEGSGLQRPKILNVGDIGGNETVTLRQSFVPVRPGPRQLIASLDSPQLSQVHGVIQVDVAPAPGDGGFFSDAGGDSHLGETIPMASRGGA</sequence>